<accession>P21622</accession>
<accession>Q9JP76</accession>
<gene>
    <name type="primary">ilvH</name>
    <name type="ordered locus">STM0117</name>
</gene>
<comment type="catalytic activity">
    <reaction>
        <text>2 pyruvate + H(+) = (2S)-2-acetolactate + CO2</text>
        <dbReference type="Rhea" id="RHEA:25249"/>
        <dbReference type="ChEBI" id="CHEBI:15361"/>
        <dbReference type="ChEBI" id="CHEBI:15378"/>
        <dbReference type="ChEBI" id="CHEBI:16526"/>
        <dbReference type="ChEBI" id="CHEBI:58476"/>
        <dbReference type="EC" id="2.2.1.6"/>
    </reaction>
</comment>
<comment type="activity regulation">
    <text>Sensitive to valine inhibition.</text>
</comment>
<comment type="pathway">
    <text>Amino-acid biosynthesis; L-isoleucine biosynthesis; L-isoleucine from 2-oxobutanoate: step 1/4.</text>
</comment>
<comment type="pathway">
    <text>Amino-acid biosynthesis; L-valine biosynthesis; L-valine from pyruvate: step 1/4.</text>
</comment>
<comment type="subunit">
    <text>Dimer of large and small chains.</text>
</comment>
<comment type="miscellaneous">
    <text>S.typhimurium contains genes for 3 AHAS isozymes: ilvBN, ilvGM and ilvIH.</text>
</comment>
<comment type="similarity">
    <text evidence="2">Belongs to the acetolactate synthase small subunit family.</text>
</comment>
<comment type="sequence caution" evidence="2">
    <conflict type="erroneous initiation">
        <sequence resource="EMBL-CDS" id="AAF65177"/>
    </conflict>
</comment>
<sequence>MRRILSVLLENESGALSRVIGLFSQRGYNIESLTVAPTDDPTLSRMTIQTVGDEKVLEQIEKQLHKLVDVLRVSELGQGAHVEREIMLVKIQASGYGREEVKRNTEIFRGQIIDVTPTLYTVQLAGTSDKLDAFLASLRDVAKIVEVARSGVVGLSRGDKIMR</sequence>
<feature type="chain" id="PRO_0000151411" description="Acetolactate synthase isozyme 3 small subunit">
    <location>
        <begin position="1"/>
        <end position="163"/>
    </location>
</feature>
<feature type="domain" description="ACT" evidence="1">
    <location>
        <begin position="4"/>
        <end position="78"/>
    </location>
</feature>
<feature type="sequence conflict" description="In Ref. 1; CAA39102." evidence="2" ref="1">
    <original>IQ</original>
    <variation>ME</variation>
    <location>
        <begin position="91"/>
        <end position="92"/>
    </location>
</feature>
<keyword id="KW-0028">Amino-acid biosynthesis</keyword>
<keyword id="KW-0100">Branched-chain amino acid biosynthesis</keyword>
<keyword id="KW-1185">Reference proteome</keyword>
<keyword id="KW-0808">Transferase</keyword>
<proteinExistence type="inferred from homology"/>
<reference key="1">
    <citation type="journal article" date="1991" name="Mol. Gen. Genet.">
        <title>Nucleotide sequence of the ilvH-fruR gene region of Escherichia coli K12 and Salmonella typhimurium LT2.</title>
        <authorList>
            <person name="Jahreis K."/>
            <person name="Postma P.W."/>
            <person name="Lengeler J.W."/>
        </authorList>
    </citation>
    <scope>NUCLEOTIDE SEQUENCE [GENOMIC DNA]</scope>
    <source>
        <strain>LT2</strain>
    </source>
</reference>
<reference key="2">
    <citation type="submission" date="2000-04" db="EMBL/GenBank/DDBJ databases">
        <authorList>
            <person name="El Hanafi D."/>
            <person name="Maloriol D."/>
            <person name="Figueroa-Bossi N."/>
            <person name="Bossi L."/>
        </authorList>
    </citation>
    <scope>NUCLEOTIDE SEQUENCE [GENOMIC DNA]</scope>
    <source>
        <strain>LT2</strain>
    </source>
</reference>
<reference key="3">
    <citation type="journal article" date="2001" name="Nature">
        <title>Complete genome sequence of Salmonella enterica serovar Typhimurium LT2.</title>
        <authorList>
            <person name="McClelland M."/>
            <person name="Sanderson K.E."/>
            <person name="Spieth J."/>
            <person name="Clifton S.W."/>
            <person name="Latreille P."/>
            <person name="Courtney L."/>
            <person name="Porwollik S."/>
            <person name="Ali J."/>
            <person name="Dante M."/>
            <person name="Du F."/>
            <person name="Hou S."/>
            <person name="Layman D."/>
            <person name="Leonard S."/>
            <person name="Nguyen C."/>
            <person name="Scott K."/>
            <person name="Holmes A."/>
            <person name="Grewal N."/>
            <person name="Mulvaney E."/>
            <person name="Ryan E."/>
            <person name="Sun H."/>
            <person name="Florea L."/>
            <person name="Miller W."/>
            <person name="Stoneking T."/>
            <person name="Nhan M."/>
            <person name="Waterston R."/>
            <person name="Wilson R.K."/>
        </authorList>
    </citation>
    <scope>NUCLEOTIDE SEQUENCE [LARGE SCALE GENOMIC DNA]</scope>
    <source>
        <strain>LT2 / SGSC1412 / ATCC 700720</strain>
    </source>
</reference>
<evidence type="ECO:0000255" key="1">
    <source>
        <dbReference type="PROSITE-ProRule" id="PRU01007"/>
    </source>
</evidence>
<evidence type="ECO:0000305" key="2"/>
<organism>
    <name type="scientific">Salmonella typhimurium (strain LT2 / SGSC1412 / ATCC 700720)</name>
    <dbReference type="NCBI Taxonomy" id="99287"/>
    <lineage>
        <taxon>Bacteria</taxon>
        <taxon>Pseudomonadati</taxon>
        <taxon>Pseudomonadota</taxon>
        <taxon>Gammaproteobacteria</taxon>
        <taxon>Enterobacterales</taxon>
        <taxon>Enterobacteriaceae</taxon>
        <taxon>Salmonella</taxon>
    </lineage>
</organism>
<name>ILVH_SALTY</name>
<protein>
    <recommendedName>
        <fullName>Acetolactate synthase isozyme 3 small subunit</fullName>
        <ecNumber>2.2.1.6</ecNumber>
    </recommendedName>
    <alternativeName>
        <fullName>ALS-III</fullName>
    </alternativeName>
    <alternativeName>
        <fullName>Acetohydroxy-acid synthase III small subunit</fullName>
        <shortName>AHAS-III</shortName>
    </alternativeName>
</protein>
<dbReference type="EC" id="2.2.1.6"/>
<dbReference type="EMBL" id="X55456">
    <property type="protein sequence ID" value="CAA39102.1"/>
    <property type="molecule type" value="Genomic_DNA"/>
</dbReference>
<dbReference type="EMBL" id="AF117227">
    <property type="protein sequence ID" value="AAF65177.1"/>
    <property type="status" value="ALT_INIT"/>
    <property type="molecule type" value="Genomic_DNA"/>
</dbReference>
<dbReference type="EMBL" id="AE006468">
    <property type="protein sequence ID" value="AAL19081.1"/>
    <property type="molecule type" value="Genomic_DNA"/>
</dbReference>
<dbReference type="PIR" id="S15940">
    <property type="entry name" value="S15940"/>
</dbReference>
<dbReference type="RefSeq" id="NP_459122.1">
    <property type="nucleotide sequence ID" value="NC_003197.2"/>
</dbReference>
<dbReference type="SMR" id="P21622"/>
<dbReference type="STRING" id="99287.STM0117"/>
<dbReference type="PaxDb" id="99287-STM0117"/>
<dbReference type="GeneID" id="1251635"/>
<dbReference type="KEGG" id="stm:STM0117"/>
<dbReference type="PATRIC" id="fig|99287.12.peg.122"/>
<dbReference type="HOGENOM" id="CLU_055003_1_3_6"/>
<dbReference type="OMA" id="RPFGIKE"/>
<dbReference type="PhylomeDB" id="P21622"/>
<dbReference type="BioCyc" id="SENT99287:STM0117-MONOMER"/>
<dbReference type="UniPathway" id="UPA00047">
    <property type="reaction ID" value="UER00055"/>
</dbReference>
<dbReference type="UniPathway" id="UPA00049">
    <property type="reaction ID" value="UER00059"/>
</dbReference>
<dbReference type="Proteomes" id="UP000001014">
    <property type="component" value="Chromosome"/>
</dbReference>
<dbReference type="GO" id="GO:0005829">
    <property type="term" value="C:cytosol"/>
    <property type="evidence" value="ECO:0000318"/>
    <property type="project" value="GO_Central"/>
</dbReference>
<dbReference type="GO" id="GO:0003984">
    <property type="term" value="F:acetolactate synthase activity"/>
    <property type="evidence" value="ECO:0000318"/>
    <property type="project" value="GO_Central"/>
</dbReference>
<dbReference type="GO" id="GO:1990610">
    <property type="term" value="F:acetolactate synthase regulator activity"/>
    <property type="evidence" value="ECO:0007669"/>
    <property type="project" value="InterPro"/>
</dbReference>
<dbReference type="GO" id="GO:0009097">
    <property type="term" value="P:isoleucine biosynthetic process"/>
    <property type="evidence" value="ECO:0000318"/>
    <property type="project" value="GO_Central"/>
</dbReference>
<dbReference type="GO" id="GO:0009099">
    <property type="term" value="P:L-valine biosynthetic process"/>
    <property type="evidence" value="ECO:0000318"/>
    <property type="project" value="GO_Central"/>
</dbReference>
<dbReference type="CDD" id="cd04878">
    <property type="entry name" value="ACT_AHAS"/>
    <property type="match status" value="1"/>
</dbReference>
<dbReference type="FunFam" id="3.30.70.1150:FF:000001">
    <property type="entry name" value="Acetolactate synthase small subunit"/>
    <property type="match status" value="1"/>
</dbReference>
<dbReference type="FunFam" id="3.30.70.260:FF:000001">
    <property type="entry name" value="Acetolactate synthase, small subunit"/>
    <property type="match status" value="1"/>
</dbReference>
<dbReference type="Gene3D" id="3.30.70.260">
    <property type="match status" value="1"/>
</dbReference>
<dbReference type="Gene3D" id="3.30.70.1150">
    <property type="entry name" value="ACT-like. Chain A, domain 2"/>
    <property type="match status" value="1"/>
</dbReference>
<dbReference type="InterPro" id="IPR004789">
    <property type="entry name" value="Acetalactate_synth_ssu"/>
</dbReference>
<dbReference type="InterPro" id="IPR027271">
    <property type="entry name" value="Acetolactate_synth/TF_NikR_C"/>
</dbReference>
<dbReference type="InterPro" id="IPR019455">
    <property type="entry name" value="Acetolactate_synth_ssu_C"/>
</dbReference>
<dbReference type="InterPro" id="IPR045865">
    <property type="entry name" value="ACT-like_dom_sf"/>
</dbReference>
<dbReference type="InterPro" id="IPR002912">
    <property type="entry name" value="ACT_dom"/>
</dbReference>
<dbReference type="InterPro" id="IPR039557">
    <property type="entry name" value="AHAS_ACT"/>
</dbReference>
<dbReference type="InterPro" id="IPR054480">
    <property type="entry name" value="AHAS_small-like_ACT"/>
</dbReference>
<dbReference type="NCBIfam" id="TIGR00119">
    <property type="entry name" value="acolac_sm"/>
    <property type="match status" value="1"/>
</dbReference>
<dbReference type="NCBIfam" id="NF008864">
    <property type="entry name" value="PRK11895.1"/>
    <property type="match status" value="1"/>
</dbReference>
<dbReference type="PANTHER" id="PTHR30239">
    <property type="entry name" value="ACETOLACTATE SYNTHASE SMALL SUBUNIT"/>
    <property type="match status" value="1"/>
</dbReference>
<dbReference type="PANTHER" id="PTHR30239:SF0">
    <property type="entry name" value="ACETOLACTATE SYNTHASE SMALL SUBUNIT 1, CHLOROPLASTIC"/>
    <property type="match status" value="1"/>
</dbReference>
<dbReference type="Pfam" id="PF22629">
    <property type="entry name" value="ACT_AHAS_ss"/>
    <property type="match status" value="1"/>
</dbReference>
<dbReference type="Pfam" id="PF10369">
    <property type="entry name" value="ALS_ss_C"/>
    <property type="match status" value="1"/>
</dbReference>
<dbReference type="SUPFAM" id="SSF55021">
    <property type="entry name" value="ACT-like"/>
    <property type="match status" value="2"/>
</dbReference>
<dbReference type="PROSITE" id="PS51671">
    <property type="entry name" value="ACT"/>
    <property type="match status" value="1"/>
</dbReference>